<gene>
    <name type="primary">opgG</name>
    <name type="synonym">mgoG</name>
    <name type="ordered locus">PSPTO_5162</name>
</gene>
<dbReference type="EMBL" id="AE016853">
    <property type="protein sequence ID" value="AAO58588.1"/>
    <property type="molecule type" value="Genomic_DNA"/>
</dbReference>
<dbReference type="RefSeq" id="NP_794893.1">
    <property type="nucleotide sequence ID" value="NC_004578.1"/>
</dbReference>
<dbReference type="SMR" id="Q87UY0"/>
<dbReference type="STRING" id="223283.PSPTO_5162"/>
<dbReference type="KEGG" id="pst:PSPTO_5162"/>
<dbReference type="PATRIC" id="fig|223283.9.peg.5283"/>
<dbReference type="eggNOG" id="COG3131">
    <property type="taxonomic scope" value="Bacteria"/>
</dbReference>
<dbReference type="HOGENOM" id="CLU_023403_2_0_6"/>
<dbReference type="OrthoDB" id="335750at2"/>
<dbReference type="PhylomeDB" id="Q87UY0"/>
<dbReference type="UniPathway" id="UPA00637"/>
<dbReference type="Proteomes" id="UP000002515">
    <property type="component" value="Chromosome"/>
</dbReference>
<dbReference type="GO" id="GO:0030288">
    <property type="term" value="C:outer membrane-bounded periplasmic space"/>
    <property type="evidence" value="ECO:0007669"/>
    <property type="project" value="TreeGrafter"/>
</dbReference>
<dbReference type="GO" id="GO:0030246">
    <property type="term" value="F:carbohydrate binding"/>
    <property type="evidence" value="ECO:0007669"/>
    <property type="project" value="InterPro"/>
</dbReference>
<dbReference type="GO" id="GO:0003824">
    <property type="term" value="F:catalytic activity"/>
    <property type="evidence" value="ECO:0007669"/>
    <property type="project" value="InterPro"/>
</dbReference>
<dbReference type="GO" id="GO:0051274">
    <property type="term" value="P:beta-glucan biosynthetic process"/>
    <property type="evidence" value="ECO:0007669"/>
    <property type="project" value="TreeGrafter"/>
</dbReference>
<dbReference type="FunFam" id="2.70.98.10:FF:000001">
    <property type="entry name" value="Glucans biosynthesis protein G"/>
    <property type="match status" value="1"/>
</dbReference>
<dbReference type="Gene3D" id="2.70.98.10">
    <property type="match status" value="1"/>
</dbReference>
<dbReference type="Gene3D" id="2.60.40.10">
    <property type="entry name" value="Immunoglobulins"/>
    <property type="match status" value="1"/>
</dbReference>
<dbReference type="HAMAP" id="MF_01069">
    <property type="entry name" value="MdoG_OpgG"/>
    <property type="match status" value="1"/>
</dbReference>
<dbReference type="InterPro" id="IPR011013">
    <property type="entry name" value="Gal_mutarotase_sf_dom"/>
</dbReference>
<dbReference type="InterPro" id="IPR014718">
    <property type="entry name" value="GH-type_carb-bd"/>
</dbReference>
<dbReference type="InterPro" id="IPR014438">
    <property type="entry name" value="Glucan_biosyn_MdoG/MdoD"/>
</dbReference>
<dbReference type="InterPro" id="IPR007444">
    <property type="entry name" value="Glucan_biosyn_MdoG_C"/>
</dbReference>
<dbReference type="InterPro" id="IPR013783">
    <property type="entry name" value="Ig-like_fold"/>
</dbReference>
<dbReference type="InterPro" id="IPR014756">
    <property type="entry name" value="Ig_E-set"/>
</dbReference>
<dbReference type="InterPro" id="IPR023704">
    <property type="entry name" value="MdoG_OpgG"/>
</dbReference>
<dbReference type="PANTHER" id="PTHR30504">
    <property type="entry name" value="GLUCANS BIOSYNTHESIS PROTEIN"/>
    <property type="match status" value="1"/>
</dbReference>
<dbReference type="PANTHER" id="PTHR30504:SF4">
    <property type="entry name" value="GLUCANS BIOSYNTHESIS PROTEIN G"/>
    <property type="match status" value="1"/>
</dbReference>
<dbReference type="Pfam" id="PF04349">
    <property type="entry name" value="MdoG"/>
    <property type="match status" value="1"/>
</dbReference>
<dbReference type="SUPFAM" id="SSF81296">
    <property type="entry name" value="E set domains"/>
    <property type="match status" value="1"/>
</dbReference>
<dbReference type="SUPFAM" id="SSF74650">
    <property type="entry name" value="Galactose mutarotase-like"/>
    <property type="match status" value="1"/>
</dbReference>
<accession>Q87UY0</accession>
<feature type="signal peptide" evidence="2">
    <location>
        <begin position="1"/>
        <end position="37"/>
    </location>
</feature>
<feature type="chain" id="PRO_0000020228" description="Glucans biosynthesis protein G">
    <location>
        <begin position="38"/>
        <end position="641"/>
    </location>
</feature>
<feature type="region of interest" description="Disordered" evidence="3">
    <location>
        <begin position="535"/>
        <end position="554"/>
    </location>
</feature>
<feature type="region of interest" description="Disordered" evidence="3">
    <location>
        <begin position="561"/>
        <end position="625"/>
    </location>
</feature>
<feature type="compositionally biased region" description="Basic and acidic residues" evidence="3">
    <location>
        <begin position="561"/>
        <end position="607"/>
    </location>
</feature>
<comment type="function">
    <text evidence="1">Involved in the biosynthesis of osmoregulated periplasmic glucans (OPGs).</text>
</comment>
<comment type="pathway">
    <text>Glycan metabolism; osmoregulated periplasmic glucan (OPG) biosynthesis.</text>
</comment>
<comment type="subcellular location">
    <subcellularLocation>
        <location evidence="1">Periplasm</location>
    </subcellularLocation>
</comment>
<comment type="similarity">
    <text evidence="4">Belongs to the OpgD/OpgG family.</text>
</comment>
<proteinExistence type="inferred from homology"/>
<organism>
    <name type="scientific">Pseudomonas syringae pv. tomato (strain ATCC BAA-871 / DC3000)</name>
    <dbReference type="NCBI Taxonomy" id="223283"/>
    <lineage>
        <taxon>Bacteria</taxon>
        <taxon>Pseudomonadati</taxon>
        <taxon>Pseudomonadota</taxon>
        <taxon>Gammaproteobacteria</taxon>
        <taxon>Pseudomonadales</taxon>
        <taxon>Pseudomonadaceae</taxon>
        <taxon>Pseudomonas</taxon>
    </lineage>
</organism>
<reference key="1">
    <citation type="journal article" date="2003" name="Proc. Natl. Acad. Sci. U.S.A.">
        <title>The complete genome sequence of the Arabidopsis and tomato pathogen Pseudomonas syringae pv. tomato DC3000.</title>
        <authorList>
            <person name="Buell C.R."/>
            <person name="Joardar V."/>
            <person name="Lindeberg M."/>
            <person name="Selengut J."/>
            <person name="Paulsen I.T."/>
            <person name="Gwinn M.L."/>
            <person name="Dodson R.J."/>
            <person name="DeBoy R.T."/>
            <person name="Durkin A.S."/>
            <person name="Kolonay J.F."/>
            <person name="Madupu R."/>
            <person name="Daugherty S.C."/>
            <person name="Brinkac L.M."/>
            <person name="Beanan M.J."/>
            <person name="Haft D.H."/>
            <person name="Nelson W.C."/>
            <person name="Davidsen T.M."/>
            <person name="Zafar N."/>
            <person name="Zhou L."/>
            <person name="Liu J."/>
            <person name="Yuan Q."/>
            <person name="Khouri H.M."/>
            <person name="Fedorova N.B."/>
            <person name="Tran B."/>
            <person name="Russell D."/>
            <person name="Berry K.J."/>
            <person name="Utterback T.R."/>
            <person name="Van Aken S.E."/>
            <person name="Feldblyum T.V."/>
            <person name="D'Ascenzo M."/>
            <person name="Deng W.-L."/>
            <person name="Ramos A.R."/>
            <person name="Alfano J.R."/>
            <person name="Cartinhour S."/>
            <person name="Chatterjee A.K."/>
            <person name="Delaney T.P."/>
            <person name="Lazarowitz S.G."/>
            <person name="Martin G.B."/>
            <person name="Schneider D.J."/>
            <person name="Tang X."/>
            <person name="Bender C.L."/>
            <person name="White O."/>
            <person name="Fraser C.M."/>
            <person name="Collmer A."/>
        </authorList>
    </citation>
    <scope>NUCLEOTIDE SEQUENCE [LARGE SCALE GENOMIC DNA]</scope>
    <source>
        <strain>ATCC BAA-871 / DC3000</strain>
    </source>
</reference>
<name>OPGG_PSESM</name>
<protein>
    <recommendedName>
        <fullName>Glucans biosynthesis protein G</fullName>
    </recommendedName>
</protein>
<evidence type="ECO:0000250" key="1"/>
<evidence type="ECO:0000255" key="2"/>
<evidence type="ECO:0000256" key="3">
    <source>
        <dbReference type="SAM" id="MobiDB-lite"/>
    </source>
</evidence>
<evidence type="ECO:0000305" key="4"/>
<sequence>MIVSPCDAPKTPVKRLRSALLASSALVCLFSAGQLWAFSLDDVAAKAKEMAGQKFEAPRSNLPNELRDMKFADYQKIRFRDDKAEWAGDKTPFKVSFYHQGMHFDTPVKINEVTATSVDEIKYDASRFDFGGLNIDPKTSEKLGYAGFRVLYPINKDDKQDEIMTMLGASYFRVIGKGQVYGLSARGMAIDTASPSGEEFPRFKEFWIEKPGPDDNHLVIFALLDSPRATGAYQLTLRPGTNTLVDVKSRMFLRDKVNKLGVAPLTSMFLFGANQPSRVPNYRRELHDSSGLSIQAANGEWLWRPLNNPKHLSISSFSVENPRGFGLLQRGRDFSQYEDLDDRYDKRPSAWIEPKGDWGKGTVELVEIPTADETNDNIVAFWKPETLKAPGEEMAFDYRLHWTMQENSIHSPDLGWVKQTQRSIGDVRQSNLIRQPDGSLAFLVDFVGPVLAALPEDKTIRSQVTTDDNVELVENNLRYNPVTKGYRLTLRVKVKDAGKATEMRAYLLREIPAEPGKEPALLVADKADEKKAAAKEAAAKEAAKPAVAKESANDQVEIAKADAPKPEAAKPEAGKADASKADAAKGDVAKADAAKADDVAKGKDGKDIQQPATEAAPTHPEPAKTLQVMTETWSYQLPSDE</sequence>
<keyword id="KW-0574">Periplasm</keyword>
<keyword id="KW-1185">Reference proteome</keyword>
<keyword id="KW-0732">Signal</keyword>